<reference key="1">
    <citation type="journal article" date="2003" name="Nat. Genet.">
        <title>Comparative analysis of the genome sequences of Bordetella pertussis, Bordetella parapertussis and Bordetella bronchiseptica.</title>
        <authorList>
            <person name="Parkhill J."/>
            <person name="Sebaihia M."/>
            <person name="Preston A."/>
            <person name="Murphy L.D."/>
            <person name="Thomson N.R."/>
            <person name="Harris D.E."/>
            <person name="Holden M.T.G."/>
            <person name="Churcher C.M."/>
            <person name="Bentley S.D."/>
            <person name="Mungall K.L."/>
            <person name="Cerdeno-Tarraga A.-M."/>
            <person name="Temple L."/>
            <person name="James K.D."/>
            <person name="Harris B."/>
            <person name="Quail M.A."/>
            <person name="Achtman M."/>
            <person name="Atkin R."/>
            <person name="Baker S."/>
            <person name="Basham D."/>
            <person name="Bason N."/>
            <person name="Cherevach I."/>
            <person name="Chillingworth T."/>
            <person name="Collins M."/>
            <person name="Cronin A."/>
            <person name="Davis P."/>
            <person name="Doggett J."/>
            <person name="Feltwell T."/>
            <person name="Goble A."/>
            <person name="Hamlin N."/>
            <person name="Hauser H."/>
            <person name="Holroyd S."/>
            <person name="Jagels K."/>
            <person name="Leather S."/>
            <person name="Moule S."/>
            <person name="Norberczak H."/>
            <person name="O'Neil S."/>
            <person name="Ormond D."/>
            <person name="Price C."/>
            <person name="Rabbinowitsch E."/>
            <person name="Rutter S."/>
            <person name="Sanders M."/>
            <person name="Saunders D."/>
            <person name="Seeger K."/>
            <person name="Sharp S."/>
            <person name="Simmonds M."/>
            <person name="Skelton J."/>
            <person name="Squares R."/>
            <person name="Squares S."/>
            <person name="Stevens K."/>
            <person name="Unwin L."/>
            <person name="Whitehead S."/>
            <person name="Barrell B.G."/>
            <person name="Maskell D.J."/>
        </authorList>
    </citation>
    <scope>NUCLEOTIDE SEQUENCE [LARGE SCALE GENOMIC DNA]</scope>
    <source>
        <strain>12822 / ATCC BAA-587 / NCTC 13253</strain>
    </source>
</reference>
<protein>
    <recommendedName>
        <fullName evidence="1">Large ribosomal subunit protein bL25</fullName>
    </recommendedName>
    <alternativeName>
        <fullName evidence="2">50S ribosomal protein L25</fullName>
    </alternativeName>
    <alternativeName>
        <fullName evidence="1">General stress protein CTC</fullName>
    </alternativeName>
</protein>
<gene>
    <name evidence="1" type="primary">rplY</name>
    <name evidence="1" type="synonym">ctc</name>
    <name type="ordered locus">BPP0818</name>
</gene>
<accession>Q7W180</accession>
<keyword id="KW-0687">Ribonucleoprotein</keyword>
<keyword id="KW-0689">Ribosomal protein</keyword>
<keyword id="KW-0694">RNA-binding</keyword>
<keyword id="KW-0699">rRNA-binding</keyword>
<feature type="chain" id="PRO_0000181521" description="Large ribosomal subunit protein bL25">
    <location>
        <begin position="1"/>
        <end position="204"/>
    </location>
</feature>
<evidence type="ECO:0000255" key="1">
    <source>
        <dbReference type="HAMAP-Rule" id="MF_01334"/>
    </source>
</evidence>
<evidence type="ECO:0000305" key="2"/>
<sequence length="204" mass="21714">MKFNATARSVQGSSASRRLRRAGRVPAIVYGGTAAPLNIELDHNEIYHALRKEEFHASILNMVIEGGKTEEVLLRSVQWHAYKPQVMHVDFQRVDANQALHTKVPLHFINAEVSPAVKLSGAIISHVLTELDITCLPALLPQFIEVNLGDLLGGGSIHLADIKLPKGVTFNAHGGDTNPLIAAAVVKGGGAADEGDAAAEQPAA</sequence>
<comment type="function">
    <text evidence="1">This is one of the proteins that binds to the 5S RNA in the ribosome where it forms part of the central protuberance.</text>
</comment>
<comment type="subunit">
    <text evidence="1">Part of the 50S ribosomal subunit; part of the 5S rRNA/L5/L18/L25 subcomplex. Contacts the 5S rRNA. Binds to the 5S rRNA independently of L5 and L18.</text>
</comment>
<comment type="similarity">
    <text evidence="1">Belongs to the bacterial ribosomal protein bL25 family. CTC subfamily.</text>
</comment>
<proteinExistence type="inferred from homology"/>
<name>RL25_BORPA</name>
<dbReference type="EMBL" id="BX640425">
    <property type="protein sequence ID" value="CAE40227.1"/>
    <property type="molecule type" value="Genomic_DNA"/>
</dbReference>
<dbReference type="RefSeq" id="WP_003808505.1">
    <property type="nucleotide sequence ID" value="NC_002928.3"/>
</dbReference>
<dbReference type="SMR" id="Q7W180"/>
<dbReference type="KEGG" id="bpa:BPP0818"/>
<dbReference type="HOGENOM" id="CLU_075939_0_1_4"/>
<dbReference type="Proteomes" id="UP000001421">
    <property type="component" value="Chromosome"/>
</dbReference>
<dbReference type="GO" id="GO:0022625">
    <property type="term" value="C:cytosolic large ribosomal subunit"/>
    <property type="evidence" value="ECO:0007669"/>
    <property type="project" value="TreeGrafter"/>
</dbReference>
<dbReference type="GO" id="GO:0008097">
    <property type="term" value="F:5S rRNA binding"/>
    <property type="evidence" value="ECO:0007669"/>
    <property type="project" value="InterPro"/>
</dbReference>
<dbReference type="GO" id="GO:0003735">
    <property type="term" value="F:structural constituent of ribosome"/>
    <property type="evidence" value="ECO:0007669"/>
    <property type="project" value="InterPro"/>
</dbReference>
<dbReference type="GO" id="GO:0006412">
    <property type="term" value="P:translation"/>
    <property type="evidence" value="ECO:0007669"/>
    <property type="project" value="UniProtKB-UniRule"/>
</dbReference>
<dbReference type="CDD" id="cd00495">
    <property type="entry name" value="Ribosomal_L25_TL5_CTC"/>
    <property type="match status" value="1"/>
</dbReference>
<dbReference type="FunFam" id="2.40.240.10:FF:000002">
    <property type="entry name" value="50S ribosomal protein L25"/>
    <property type="match status" value="1"/>
</dbReference>
<dbReference type="Gene3D" id="2.170.120.20">
    <property type="entry name" value="Ribosomal protein L25, beta domain"/>
    <property type="match status" value="1"/>
</dbReference>
<dbReference type="Gene3D" id="2.40.240.10">
    <property type="entry name" value="Ribosomal Protein L25, Chain P"/>
    <property type="match status" value="1"/>
</dbReference>
<dbReference type="HAMAP" id="MF_01336">
    <property type="entry name" value="Ribosomal_bL25"/>
    <property type="match status" value="1"/>
</dbReference>
<dbReference type="HAMAP" id="MF_01334">
    <property type="entry name" value="Ribosomal_bL25_CTC"/>
    <property type="match status" value="1"/>
</dbReference>
<dbReference type="InterPro" id="IPR020056">
    <property type="entry name" value="Rbsml_bL25/Gln-tRNA_synth_N"/>
</dbReference>
<dbReference type="InterPro" id="IPR011035">
    <property type="entry name" value="Ribosomal_bL25/Gln-tRNA_synth"/>
</dbReference>
<dbReference type="InterPro" id="IPR020057">
    <property type="entry name" value="Ribosomal_bL25_b-dom"/>
</dbReference>
<dbReference type="InterPro" id="IPR037121">
    <property type="entry name" value="Ribosomal_bL25_C"/>
</dbReference>
<dbReference type="InterPro" id="IPR001021">
    <property type="entry name" value="Ribosomal_bL25_long"/>
</dbReference>
<dbReference type="InterPro" id="IPR020055">
    <property type="entry name" value="Ribosomal_bL25_short"/>
</dbReference>
<dbReference type="InterPro" id="IPR029751">
    <property type="entry name" value="Ribosomal_L25_dom"/>
</dbReference>
<dbReference type="InterPro" id="IPR020930">
    <property type="entry name" value="Ribosomal_uL5_bac-type"/>
</dbReference>
<dbReference type="NCBIfam" id="TIGR00731">
    <property type="entry name" value="bL25_bact_ctc"/>
    <property type="match status" value="1"/>
</dbReference>
<dbReference type="NCBIfam" id="NF004130">
    <property type="entry name" value="PRK05618.1-5"/>
    <property type="match status" value="1"/>
</dbReference>
<dbReference type="NCBIfam" id="NF004612">
    <property type="entry name" value="PRK05943.1"/>
    <property type="match status" value="1"/>
</dbReference>
<dbReference type="PANTHER" id="PTHR33284">
    <property type="entry name" value="RIBOSOMAL PROTEIN L25/GLN-TRNA SYNTHETASE, ANTI-CODON-BINDING DOMAIN-CONTAINING PROTEIN"/>
    <property type="match status" value="1"/>
</dbReference>
<dbReference type="PANTHER" id="PTHR33284:SF1">
    <property type="entry name" value="RIBOSOMAL PROTEIN L25_GLN-TRNA SYNTHETASE, ANTI-CODON-BINDING DOMAIN-CONTAINING PROTEIN"/>
    <property type="match status" value="1"/>
</dbReference>
<dbReference type="Pfam" id="PF01386">
    <property type="entry name" value="Ribosomal_L25p"/>
    <property type="match status" value="1"/>
</dbReference>
<dbReference type="Pfam" id="PF14693">
    <property type="entry name" value="Ribosomal_TL5_C"/>
    <property type="match status" value="1"/>
</dbReference>
<dbReference type="SUPFAM" id="SSF50715">
    <property type="entry name" value="Ribosomal protein L25-like"/>
    <property type="match status" value="1"/>
</dbReference>
<organism>
    <name type="scientific">Bordetella parapertussis (strain 12822 / ATCC BAA-587 / NCTC 13253)</name>
    <dbReference type="NCBI Taxonomy" id="257311"/>
    <lineage>
        <taxon>Bacteria</taxon>
        <taxon>Pseudomonadati</taxon>
        <taxon>Pseudomonadota</taxon>
        <taxon>Betaproteobacteria</taxon>
        <taxon>Burkholderiales</taxon>
        <taxon>Alcaligenaceae</taxon>
        <taxon>Bordetella</taxon>
    </lineage>
</organism>